<evidence type="ECO:0000255" key="1">
    <source>
        <dbReference type="HAMAP-Rule" id="MF_00074"/>
    </source>
</evidence>
<evidence type="ECO:0000256" key="2">
    <source>
        <dbReference type="SAM" id="MobiDB-lite"/>
    </source>
</evidence>
<keyword id="KW-0963">Cytoplasm</keyword>
<keyword id="KW-0489">Methyltransferase</keyword>
<keyword id="KW-1185">Reference proteome</keyword>
<keyword id="KW-0698">rRNA processing</keyword>
<keyword id="KW-0949">S-adenosyl-L-methionine</keyword>
<keyword id="KW-0808">Transferase</keyword>
<accession>Q0RAP0</accession>
<name>RSMG_FRAAA</name>
<sequence length="262" mass="28061">MGPPPAAPAAAAELFGPRLAAAERFTELLATAGVERGLIGPRETDRLWERHVINCGVLAEVVPEGADAVDVGSGAGLPGIPLALARPDVRVVLLEPMERRCRFLQEVVAAVGLEEQVSVLRGRAPDAGIGPEGRRFGVAVARAVAPLERLGAILLPMLQPGGVMLAMRGSRILEELQDARGSLGTQGWHPVDVVVCGEGRVDEPTRVLRAVRSSQLSRAEGRKGRGDGERHDGRQVRRTARDSRRSREVDRDQPTRGQSRST</sequence>
<feature type="chain" id="PRO_0000335353" description="Ribosomal RNA small subunit methyltransferase G">
    <location>
        <begin position="1"/>
        <end position="262"/>
    </location>
</feature>
<feature type="region of interest" description="Disordered" evidence="2">
    <location>
        <begin position="212"/>
        <end position="262"/>
    </location>
</feature>
<feature type="compositionally biased region" description="Basic and acidic residues" evidence="2">
    <location>
        <begin position="219"/>
        <end position="254"/>
    </location>
</feature>
<feature type="binding site" evidence="1">
    <location>
        <position position="72"/>
    </location>
    <ligand>
        <name>S-adenosyl-L-methionine</name>
        <dbReference type="ChEBI" id="CHEBI:59789"/>
    </ligand>
</feature>
<feature type="binding site" evidence="1">
    <location>
        <position position="77"/>
    </location>
    <ligand>
        <name>S-adenosyl-L-methionine</name>
        <dbReference type="ChEBI" id="CHEBI:59789"/>
    </ligand>
</feature>
<feature type="binding site" evidence="1">
    <location>
        <position position="142"/>
    </location>
    <ligand>
        <name>S-adenosyl-L-methionine</name>
        <dbReference type="ChEBI" id="CHEBI:59789"/>
    </ligand>
</feature>
<gene>
    <name evidence="1" type="primary">rsmG</name>
    <name type="ordered locus">FRAAL6878</name>
</gene>
<organism>
    <name type="scientific">Frankia alni (strain DSM 45986 / CECT 9034 / ACN14a)</name>
    <dbReference type="NCBI Taxonomy" id="326424"/>
    <lineage>
        <taxon>Bacteria</taxon>
        <taxon>Bacillati</taxon>
        <taxon>Actinomycetota</taxon>
        <taxon>Actinomycetes</taxon>
        <taxon>Frankiales</taxon>
        <taxon>Frankiaceae</taxon>
        <taxon>Frankia</taxon>
    </lineage>
</organism>
<protein>
    <recommendedName>
        <fullName evidence="1">Ribosomal RNA small subunit methyltransferase G</fullName>
        <ecNumber evidence="1">2.1.1.-</ecNumber>
    </recommendedName>
    <alternativeName>
        <fullName evidence="1">16S rRNA 7-methylguanosine methyltransferase</fullName>
        <shortName evidence="1">16S rRNA m7G methyltransferase</shortName>
    </alternativeName>
</protein>
<dbReference type="EC" id="2.1.1.-" evidence="1"/>
<dbReference type="EMBL" id="CT573213">
    <property type="protein sequence ID" value="CAJ65501.1"/>
    <property type="molecule type" value="Genomic_DNA"/>
</dbReference>
<dbReference type="RefSeq" id="WP_011607913.1">
    <property type="nucleotide sequence ID" value="NC_008278.1"/>
</dbReference>
<dbReference type="SMR" id="Q0RAP0"/>
<dbReference type="STRING" id="326424.FRAAL6878"/>
<dbReference type="KEGG" id="fal:FRAAL6878"/>
<dbReference type="eggNOG" id="COG0357">
    <property type="taxonomic scope" value="Bacteria"/>
</dbReference>
<dbReference type="HOGENOM" id="CLU_065341_5_0_11"/>
<dbReference type="OrthoDB" id="9808773at2"/>
<dbReference type="Proteomes" id="UP000000657">
    <property type="component" value="Chromosome"/>
</dbReference>
<dbReference type="GO" id="GO:0005829">
    <property type="term" value="C:cytosol"/>
    <property type="evidence" value="ECO:0007669"/>
    <property type="project" value="TreeGrafter"/>
</dbReference>
<dbReference type="GO" id="GO:0070043">
    <property type="term" value="F:rRNA (guanine-N7-)-methyltransferase activity"/>
    <property type="evidence" value="ECO:0007669"/>
    <property type="project" value="UniProtKB-UniRule"/>
</dbReference>
<dbReference type="CDD" id="cd02440">
    <property type="entry name" value="AdoMet_MTases"/>
    <property type="match status" value="1"/>
</dbReference>
<dbReference type="Gene3D" id="3.40.50.150">
    <property type="entry name" value="Vaccinia Virus protein VP39"/>
    <property type="match status" value="1"/>
</dbReference>
<dbReference type="HAMAP" id="MF_00074">
    <property type="entry name" value="16SrRNA_methyltr_G"/>
    <property type="match status" value="1"/>
</dbReference>
<dbReference type="InterPro" id="IPR003682">
    <property type="entry name" value="rRNA_ssu_MeTfrase_G"/>
</dbReference>
<dbReference type="InterPro" id="IPR029063">
    <property type="entry name" value="SAM-dependent_MTases_sf"/>
</dbReference>
<dbReference type="NCBIfam" id="TIGR00138">
    <property type="entry name" value="rsmG_gidB"/>
    <property type="match status" value="1"/>
</dbReference>
<dbReference type="PANTHER" id="PTHR31760">
    <property type="entry name" value="S-ADENOSYL-L-METHIONINE-DEPENDENT METHYLTRANSFERASES SUPERFAMILY PROTEIN"/>
    <property type="match status" value="1"/>
</dbReference>
<dbReference type="PANTHER" id="PTHR31760:SF0">
    <property type="entry name" value="S-ADENOSYL-L-METHIONINE-DEPENDENT METHYLTRANSFERASES SUPERFAMILY PROTEIN"/>
    <property type="match status" value="1"/>
</dbReference>
<dbReference type="Pfam" id="PF02527">
    <property type="entry name" value="GidB"/>
    <property type="match status" value="1"/>
</dbReference>
<dbReference type="SUPFAM" id="SSF53335">
    <property type="entry name" value="S-adenosyl-L-methionine-dependent methyltransferases"/>
    <property type="match status" value="1"/>
</dbReference>
<reference key="1">
    <citation type="journal article" date="2007" name="Genome Res.">
        <title>Genome characteristics of facultatively symbiotic Frankia sp. strains reflect host range and host plant biogeography.</title>
        <authorList>
            <person name="Normand P."/>
            <person name="Lapierre P."/>
            <person name="Tisa L.S."/>
            <person name="Gogarten J.P."/>
            <person name="Alloisio N."/>
            <person name="Bagnarol E."/>
            <person name="Bassi C.A."/>
            <person name="Berry A.M."/>
            <person name="Bickhart D.M."/>
            <person name="Choisne N."/>
            <person name="Couloux A."/>
            <person name="Cournoyer B."/>
            <person name="Cruveiller S."/>
            <person name="Daubin V."/>
            <person name="Demange N."/>
            <person name="Francino M.P."/>
            <person name="Goltsman E."/>
            <person name="Huang Y."/>
            <person name="Kopp O.R."/>
            <person name="Labarre L."/>
            <person name="Lapidus A."/>
            <person name="Lavire C."/>
            <person name="Marechal J."/>
            <person name="Martinez M."/>
            <person name="Mastronunzio J.E."/>
            <person name="Mullin B.C."/>
            <person name="Niemann J."/>
            <person name="Pujic P."/>
            <person name="Rawnsley T."/>
            <person name="Rouy Z."/>
            <person name="Schenowitz C."/>
            <person name="Sellstedt A."/>
            <person name="Tavares F."/>
            <person name="Tomkins J.P."/>
            <person name="Vallenet D."/>
            <person name="Valverde C."/>
            <person name="Wall L.G."/>
            <person name="Wang Y."/>
            <person name="Medigue C."/>
            <person name="Benson D.R."/>
        </authorList>
    </citation>
    <scope>NUCLEOTIDE SEQUENCE [LARGE SCALE GENOMIC DNA]</scope>
    <source>
        <strain>DSM 45986 / CECT 9034 / ACN14a</strain>
    </source>
</reference>
<proteinExistence type="inferred from homology"/>
<comment type="function">
    <text evidence="1">Specifically methylates the N7 position of guanine in position 518 of 16S rRNA.</text>
</comment>
<comment type="subcellular location">
    <subcellularLocation>
        <location evidence="1">Cytoplasm</location>
    </subcellularLocation>
</comment>
<comment type="similarity">
    <text evidence="1">Belongs to the methyltransferase superfamily. RNA methyltransferase RsmG family.</text>
</comment>